<protein>
    <recommendedName>
        <fullName>Protein UL21 homolog</fullName>
    </recommendedName>
</protein>
<evidence type="ECO:0000305" key="1"/>
<organism>
    <name type="scientific">Equine herpesvirus 4 (strain 1942)</name>
    <name type="common">EHV-4</name>
    <name type="synonym">Equine rhinopneumonitis virus</name>
    <dbReference type="NCBI Taxonomy" id="10333"/>
    <lineage>
        <taxon>Viruses</taxon>
        <taxon>Duplodnaviria</taxon>
        <taxon>Heunggongvirae</taxon>
        <taxon>Peploviricota</taxon>
        <taxon>Herviviricetes</taxon>
        <taxon>Herpesvirales</taxon>
        <taxon>Orthoherpesviridae</taxon>
        <taxon>Alphaherpesvirinae</taxon>
        <taxon>Varicellovirus</taxon>
        <taxon>Varicellovirus equidalpha4</taxon>
        <taxon>Equid alphaherpesvirus 4</taxon>
    </lineage>
</organism>
<feature type="chain" id="PRO_0000115973" description="Protein UL21 homolog">
    <location>
        <begin position="1" status="less than"/>
        <end position="41"/>
    </location>
</feature>
<feature type="non-terminal residue">
    <location>
        <position position="1"/>
    </location>
</feature>
<organismHost>
    <name type="scientific">Equus caballus</name>
    <name type="common">Horse</name>
    <dbReference type="NCBI Taxonomy" id="9796"/>
</organismHost>
<dbReference type="EMBL" id="D14486">
    <property type="protein sequence ID" value="BAA03380.1"/>
    <property type="molecule type" value="Genomic_DNA"/>
</dbReference>
<dbReference type="SMR" id="P24431"/>
<name>UL21_EHV4</name>
<sequence>NVSLITAFDNLDLSRKGAYYLYYLLSERLKRGGVPVHVNRA</sequence>
<reference key="1">
    <citation type="journal article" date="1990" name="J. Gen. Virol.">
        <title>The nucleotide sequence of an equine herpesvirus 4 gene homologue of the herpes simplex virus 1 glycoprotein H gene.</title>
        <authorList>
            <person name="Nicolson L."/>
            <person name="Cullinane A.A."/>
            <person name="Onions D.E."/>
        </authorList>
    </citation>
    <scope>NUCLEOTIDE SEQUENCE [GENOMIC DNA]</scope>
</reference>
<comment type="similarity">
    <text evidence="1">Belongs to the herpesviridae UL21 family.</text>
</comment>
<accession>P24431</accession>
<proteinExistence type="inferred from homology"/>